<evidence type="ECO:0000255" key="1">
    <source>
        <dbReference type="PROSITE-ProRule" id="PRU01185"/>
    </source>
</evidence>
<evidence type="ECO:0000269" key="2">
    <source>
    </source>
</evidence>
<evidence type="ECO:0000269" key="3">
    <source>
    </source>
</evidence>
<evidence type="ECO:0000305" key="4"/>
<feature type="chain" id="PRO_0000437236" description="26S proteasome regulatory subunit rpn502">
    <location>
        <begin position="1"/>
        <end position="443"/>
    </location>
</feature>
<feature type="domain" description="PCI" evidence="1">
    <location>
        <begin position="230"/>
        <end position="402"/>
    </location>
</feature>
<feature type="modified residue" description="Phosphoserine" evidence="3">
    <location>
        <position position="209"/>
    </location>
</feature>
<reference key="1">
    <citation type="journal article" date="2002" name="Nature">
        <title>The genome sequence of Schizosaccharomyces pombe.</title>
        <authorList>
            <person name="Wood V."/>
            <person name="Gwilliam R."/>
            <person name="Rajandream M.A."/>
            <person name="Lyne M.H."/>
            <person name="Lyne R."/>
            <person name="Stewart A."/>
            <person name="Sgouros J.G."/>
            <person name="Peat N."/>
            <person name="Hayles J."/>
            <person name="Baker S.G."/>
            <person name="Basham D."/>
            <person name="Bowman S."/>
            <person name="Brooks K."/>
            <person name="Brown D."/>
            <person name="Brown S."/>
            <person name="Chillingworth T."/>
            <person name="Churcher C.M."/>
            <person name="Collins M."/>
            <person name="Connor R."/>
            <person name="Cronin A."/>
            <person name="Davis P."/>
            <person name="Feltwell T."/>
            <person name="Fraser A."/>
            <person name="Gentles S."/>
            <person name="Goble A."/>
            <person name="Hamlin N."/>
            <person name="Harris D.E."/>
            <person name="Hidalgo J."/>
            <person name="Hodgson G."/>
            <person name="Holroyd S."/>
            <person name="Hornsby T."/>
            <person name="Howarth S."/>
            <person name="Huckle E.J."/>
            <person name="Hunt S."/>
            <person name="Jagels K."/>
            <person name="James K.D."/>
            <person name="Jones L."/>
            <person name="Jones M."/>
            <person name="Leather S."/>
            <person name="McDonald S."/>
            <person name="McLean J."/>
            <person name="Mooney P."/>
            <person name="Moule S."/>
            <person name="Mungall K.L."/>
            <person name="Murphy L.D."/>
            <person name="Niblett D."/>
            <person name="Odell C."/>
            <person name="Oliver K."/>
            <person name="O'Neil S."/>
            <person name="Pearson D."/>
            <person name="Quail M.A."/>
            <person name="Rabbinowitsch E."/>
            <person name="Rutherford K.M."/>
            <person name="Rutter S."/>
            <person name="Saunders D."/>
            <person name="Seeger K."/>
            <person name="Sharp S."/>
            <person name="Skelton J."/>
            <person name="Simmonds M.N."/>
            <person name="Squares R."/>
            <person name="Squares S."/>
            <person name="Stevens K."/>
            <person name="Taylor K."/>
            <person name="Taylor R.G."/>
            <person name="Tivey A."/>
            <person name="Walsh S.V."/>
            <person name="Warren T."/>
            <person name="Whitehead S."/>
            <person name="Woodward J.R."/>
            <person name="Volckaert G."/>
            <person name="Aert R."/>
            <person name="Robben J."/>
            <person name="Grymonprez B."/>
            <person name="Weltjens I."/>
            <person name="Vanstreels E."/>
            <person name="Rieger M."/>
            <person name="Schaefer M."/>
            <person name="Mueller-Auer S."/>
            <person name="Gabel C."/>
            <person name="Fuchs M."/>
            <person name="Duesterhoeft A."/>
            <person name="Fritzc C."/>
            <person name="Holzer E."/>
            <person name="Moestl D."/>
            <person name="Hilbert H."/>
            <person name="Borzym K."/>
            <person name="Langer I."/>
            <person name="Beck A."/>
            <person name="Lehrach H."/>
            <person name="Reinhardt R."/>
            <person name="Pohl T.M."/>
            <person name="Eger P."/>
            <person name="Zimmermann W."/>
            <person name="Wedler H."/>
            <person name="Wambutt R."/>
            <person name="Purnelle B."/>
            <person name="Goffeau A."/>
            <person name="Cadieu E."/>
            <person name="Dreano S."/>
            <person name="Gloux S."/>
            <person name="Lelaure V."/>
            <person name="Mottier S."/>
            <person name="Galibert F."/>
            <person name="Aves S.J."/>
            <person name="Xiang Z."/>
            <person name="Hunt C."/>
            <person name="Moore K."/>
            <person name="Hurst S.M."/>
            <person name="Lucas M."/>
            <person name="Rochet M."/>
            <person name="Gaillardin C."/>
            <person name="Tallada V.A."/>
            <person name="Garzon A."/>
            <person name="Thode G."/>
            <person name="Daga R.R."/>
            <person name="Cruzado L."/>
            <person name="Jimenez J."/>
            <person name="Sanchez M."/>
            <person name="del Rey F."/>
            <person name="Benito J."/>
            <person name="Dominguez A."/>
            <person name="Revuelta J.L."/>
            <person name="Moreno S."/>
            <person name="Armstrong J."/>
            <person name="Forsburg S.L."/>
            <person name="Cerutti L."/>
            <person name="Lowe T."/>
            <person name="McCombie W.R."/>
            <person name="Paulsen I."/>
            <person name="Potashkin J."/>
            <person name="Shpakovski G.V."/>
            <person name="Ussery D."/>
            <person name="Barrell B.G."/>
            <person name="Nurse P."/>
        </authorList>
    </citation>
    <scope>NUCLEOTIDE SEQUENCE [LARGE SCALE GENOMIC DNA]</scope>
    <source>
        <strain>972 / ATCC 24843</strain>
    </source>
</reference>
<reference key="2">
    <citation type="journal article" date="2003" name="J. Biol. Chem.">
        <title>Rpn5 is a conserved proteasome subunit and required for proper proteasome localization and assembly.</title>
        <authorList>
            <person name="Yen H.-C.S."/>
            <person name="Espiritu C."/>
            <person name="Chang E.C."/>
        </authorList>
    </citation>
    <scope>FUNCTION</scope>
    <scope>SUBCELLULAR LOCATION</scope>
    <source>
        <strain>SP870</strain>
    </source>
</reference>
<reference key="3">
    <citation type="journal article" date="2008" name="J. Proteome Res.">
        <title>Phosphoproteome analysis of fission yeast.</title>
        <authorList>
            <person name="Wilson-Grady J.T."/>
            <person name="Villen J."/>
            <person name="Gygi S.P."/>
        </authorList>
    </citation>
    <scope>PHOSPHORYLATION [LARGE SCALE ANALYSIS] AT SER-209</scope>
    <scope>IDENTIFICATION BY MASS SPECTROMETRY</scope>
</reference>
<dbReference type="EMBL" id="CU329670">
    <property type="protein sequence ID" value="CAC37421.1"/>
    <property type="molecule type" value="Genomic_DNA"/>
</dbReference>
<dbReference type="PIR" id="T37666">
    <property type="entry name" value="T37666"/>
</dbReference>
<dbReference type="RefSeq" id="NP_593278.1">
    <property type="nucleotide sequence ID" value="NM_001018674.2"/>
</dbReference>
<dbReference type="RefSeq" id="NP_594776.1">
    <property type="nucleotide sequence ID" value="NM_001020204.2"/>
</dbReference>
<dbReference type="SMR" id="P0CU18"/>
<dbReference type="ComplexPortal" id="CPX-9077">
    <property type="entry name" value="26S proteasome complex"/>
</dbReference>
<dbReference type="FunCoup" id="P0CU18">
    <property type="interactions" value="789"/>
</dbReference>
<dbReference type="STRING" id="284812.P0CU18"/>
<dbReference type="iPTMnet" id="P0CU18"/>
<dbReference type="EnsemblFungi" id="SPAC1420.03.1">
    <property type="protein sequence ID" value="SPAC1420.03.1:pep"/>
    <property type="gene ID" value="SPAC1420.03"/>
</dbReference>
<dbReference type="EnsemblFungi" id="SPAPB8E5.02c.1">
    <property type="protein sequence ID" value="SPAPB8E5.02c.1:pep"/>
    <property type="gene ID" value="SPAPB8E5.02c"/>
</dbReference>
<dbReference type="GeneID" id="2542907"/>
<dbReference type="GeneID" id="2543347"/>
<dbReference type="KEGG" id="spo:2542907"/>
<dbReference type="KEGG" id="spo:2543347"/>
<dbReference type="PomBase" id="SPAPB8E5.02c">
    <property type="gene designation" value="rpn502"/>
</dbReference>
<dbReference type="VEuPathDB" id="FungiDB:SPAC1420.03"/>
<dbReference type="VEuPathDB" id="FungiDB:SPAPB8E5.02c"/>
<dbReference type="InParanoid" id="P0CU18"/>
<dbReference type="OMA" id="AENEMFK"/>
<dbReference type="PhylomeDB" id="P0CU18"/>
<dbReference type="Reactome" id="R-SPO-1236978">
    <property type="pathway name" value="Cross-presentation of soluble exogenous antigens (endosomes)"/>
</dbReference>
<dbReference type="Reactome" id="R-SPO-350562">
    <property type="pathway name" value="Regulation of ornithine decarboxylase (ODC)"/>
</dbReference>
<dbReference type="Reactome" id="R-SPO-5687128">
    <property type="pathway name" value="MAPK6/MAPK4 signaling"/>
</dbReference>
<dbReference type="Reactome" id="R-SPO-5689603">
    <property type="pathway name" value="UCH proteinases"/>
</dbReference>
<dbReference type="Reactome" id="R-SPO-5689880">
    <property type="pathway name" value="Ub-specific processing proteases"/>
</dbReference>
<dbReference type="Reactome" id="R-SPO-6798695">
    <property type="pathway name" value="Neutrophil degranulation"/>
</dbReference>
<dbReference type="Reactome" id="R-SPO-68949">
    <property type="pathway name" value="Orc1 removal from chromatin"/>
</dbReference>
<dbReference type="Reactome" id="R-SPO-69017">
    <property type="pathway name" value="CDK-mediated phosphorylation and removal of Cdc6"/>
</dbReference>
<dbReference type="Reactome" id="R-SPO-69601">
    <property type="pathway name" value="Ubiquitin Mediated Degradation of Phosphorylated Cdc25A"/>
</dbReference>
<dbReference type="Reactome" id="R-SPO-75815">
    <property type="pathway name" value="Ubiquitin-dependent degradation of Cyclin D"/>
</dbReference>
<dbReference type="Reactome" id="R-SPO-8854050">
    <property type="pathway name" value="FBXL7 down-regulates AURKA during mitotic entry and in early mitosis"/>
</dbReference>
<dbReference type="Reactome" id="R-SPO-8948751">
    <property type="pathway name" value="Regulation of PTEN stability and activity"/>
</dbReference>
<dbReference type="Reactome" id="R-SPO-8951664">
    <property type="pathway name" value="Neddylation"/>
</dbReference>
<dbReference type="Reactome" id="R-SPO-9755511">
    <property type="pathway name" value="KEAP1-NFE2L2 pathway"/>
</dbReference>
<dbReference type="Reactome" id="R-SPO-983168">
    <property type="pathway name" value="Antigen processing: Ubiquitination &amp; Proteasome degradation"/>
</dbReference>
<dbReference type="Reactome" id="R-SPO-9907900">
    <property type="pathway name" value="Proteasome assembly"/>
</dbReference>
<dbReference type="PRO" id="PR:P0CU18"/>
<dbReference type="Proteomes" id="UP000002485">
    <property type="component" value="Chromosome I"/>
</dbReference>
<dbReference type="GO" id="GO:0005737">
    <property type="term" value="C:cytoplasm"/>
    <property type="evidence" value="ECO:0000318"/>
    <property type="project" value="GO_Central"/>
</dbReference>
<dbReference type="GO" id="GO:0034399">
    <property type="term" value="C:nuclear periphery"/>
    <property type="evidence" value="ECO:0000314"/>
    <property type="project" value="PomBase"/>
</dbReference>
<dbReference type="GO" id="GO:0005634">
    <property type="term" value="C:nucleus"/>
    <property type="evidence" value="ECO:0000314"/>
    <property type="project" value="PomBase"/>
</dbReference>
<dbReference type="GO" id="GO:0000502">
    <property type="term" value="C:proteasome complex"/>
    <property type="evidence" value="ECO:0000314"/>
    <property type="project" value="PomBase"/>
</dbReference>
<dbReference type="GO" id="GO:0008541">
    <property type="term" value="C:proteasome regulatory particle, lid subcomplex"/>
    <property type="evidence" value="ECO:0000314"/>
    <property type="project" value="PomBase"/>
</dbReference>
<dbReference type="GO" id="GO:0043161">
    <property type="term" value="P:proteasome-mediated ubiquitin-dependent protein catabolic process"/>
    <property type="evidence" value="ECO:0000266"/>
    <property type="project" value="PomBase"/>
</dbReference>
<dbReference type="FunFam" id="1.10.10.10:FF:000070">
    <property type="entry name" value="26S proteasome non-ATPase regulatory subunit 12"/>
    <property type="match status" value="1"/>
</dbReference>
<dbReference type="Gene3D" id="1.10.10.10">
    <property type="entry name" value="Winged helix-like DNA-binding domain superfamily/Winged helix DNA-binding domain"/>
    <property type="match status" value="1"/>
</dbReference>
<dbReference type="InterPro" id="IPR000717">
    <property type="entry name" value="PCI_dom"/>
</dbReference>
<dbReference type="InterPro" id="IPR054559">
    <property type="entry name" value="PSMD12-CSN4-like_N"/>
</dbReference>
<dbReference type="InterPro" id="IPR040134">
    <property type="entry name" value="PSMD12/CSN4"/>
</dbReference>
<dbReference type="InterPro" id="IPR040896">
    <property type="entry name" value="RPN5_C"/>
</dbReference>
<dbReference type="InterPro" id="IPR036388">
    <property type="entry name" value="WH-like_DNA-bd_sf"/>
</dbReference>
<dbReference type="InterPro" id="IPR036390">
    <property type="entry name" value="WH_DNA-bd_sf"/>
</dbReference>
<dbReference type="PANTHER" id="PTHR10855:SF1">
    <property type="entry name" value="26S PROTEASOME NON-ATPASE REGULATORY SUBUNIT 12"/>
    <property type="match status" value="1"/>
</dbReference>
<dbReference type="PANTHER" id="PTHR10855">
    <property type="entry name" value="26S PROTEASOME NON-ATPASE REGULATORY SUBUNIT 12/COP9 SIGNALOSOME COMPLEX SUBUNIT 4"/>
    <property type="match status" value="1"/>
</dbReference>
<dbReference type="Pfam" id="PF01399">
    <property type="entry name" value="PCI"/>
    <property type="match status" value="1"/>
</dbReference>
<dbReference type="Pfam" id="PF22241">
    <property type="entry name" value="PSMD12-CSN4_N"/>
    <property type="match status" value="1"/>
</dbReference>
<dbReference type="Pfam" id="PF18098">
    <property type="entry name" value="RPN5_C"/>
    <property type="match status" value="1"/>
</dbReference>
<dbReference type="SMART" id="SM00088">
    <property type="entry name" value="PINT"/>
    <property type="match status" value="1"/>
</dbReference>
<dbReference type="SUPFAM" id="SSF46785">
    <property type="entry name" value="Winged helix' DNA-binding domain"/>
    <property type="match status" value="1"/>
</dbReference>
<dbReference type="PROSITE" id="PS50250">
    <property type="entry name" value="PCI"/>
    <property type="match status" value="1"/>
</dbReference>
<keyword id="KW-0539">Nucleus</keyword>
<keyword id="KW-0597">Phosphoprotein</keyword>
<keyword id="KW-0647">Proteasome</keyword>
<keyword id="KW-1185">Reference proteome</keyword>
<sequence length="443" mass="51618">MEQKPEVDYSEKFAELQKSLNNLNTIDIDANLEKLLIFEKQVRQASDTSTNTKVLIYIADLLFRAGDFQGLNEQLVSLFKKHGQLKQSMTSLVQHVMTYLPGIDDLKTKINLIETLRTITDGKIYVEVERARLTQLLSQIKEEQGDIKSAQEILCNEPVETYGSFDLKEKVAFILDQVRLFLLRSDYYMASTYTKKINVKFFEKEDVQSLKLKYYEQKIRIGLHDDAYLDVCKYYRAVYDTAVVQEDPEKWKEILENVVCFALLTPYDNEQADLLHRINADHKLNSLPLLQQLVKCFIVNELMRWPKIAEIYGSALRSNPVFAENDEKGEKRWSELRKRVIEHNIRVVANYYSRIHCSRLGVLLDMSPSETEQFLCDLIAKHHFYAKIDRPAQVISFKKSQNVQEQLNEWGSNITELLGKLEKVRQLIIKEEMMNSIQQAVAK</sequence>
<organism>
    <name type="scientific">Schizosaccharomyces pombe (strain 972 / ATCC 24843)</name>
    <name type="common">Fission yeast</name>
    <dbReference type="NCBI Taxonomy" id="284812"/>
    <lineage>
        <taxon>Eukaryota</taxon>
        <taxon>Fungi</taxon>
        <taxon>Dikarya</taxon>
        <taxon>Ascomycota</taxon>
        <taxon>Taphrinomycotina</taxon>
        <taxon>Schizosaccharomycetes</taxon>
        <taxon>Schizosaccharomycetales</taxon>
        <taxon>Schizosaccharomycetaceae</taxon>
        <taxon>Schizosaccharomyces</taxon>
    </lineage>
</organism>
<protein>
    <recommendedName>
        <fullName>26S proteasome regulatory subunit rpn502</fullName>
    </recommendedName>
</protein>
<gene>
    <name type="primary">rpn502</name>
    <name type="synonym">rpn5</name>
    <name type="synonym">rpn5b</name>
    <name type="ORF">SPAPB8E5.02c</name>
</gene>
<comment type="function">
    <text evidence="2">Acts as a regulatory subunit of the 26S proteasome which is involved in the ATP-dependent degradation of ubiquitinated proteins. Required for proper proteasome assembly.</text>
</comment>
<comment type="subcellular location">
    <subcellularLocation>
        <location evidence="2">Nucleus</location>
    </subcellularLocation>
</comment>
<comment type="similarity">
    <text evidence="4">Belongs to the proteasome subunit p55 family.</text>
</comment>
<proteinExistence type="evidence at protein level"/>
<accession>P0CU18</accession>
<accession>O14381</accession>
<accession>Q9UTM3</accession>
<name>RPN52_SCHPO</name>